<evidence type="ECO:0000250" key="1"/>
<evidence type="ECO:0000269" key="2">
    <source>
    </source>
</evidence>
<evidence type="ECO:0000269" key="3">
    <source>
    </source>
</evidence>
<evidence type="ECO:0000269" key="4">
    <source>
    </source>
</evidence>
<evidence type="ECO:0000269" key="5">
    <source>
    </source>
</evidence>
<evidence type="ECO:0000269" key="6">
    <source>
    </source>
</evidence>
<evidence type="ECO:0000305" key="7"/>
<reference key="1">
    <citation type="journal article" date="1993" name="FEBS Lett.">
        <title>Characterization of two cDNAs (ERD11 and ERD13) for dehydration-inducible genes that encode putative glutathione S-transferases in Arabidopsis thaliana L.</title>
        <authorList>
            <person name="Kiyosue T."/>
            <person name="Yamaguchi-Shinozaki K."/>
            <person name="Shinozaki K."/>
        </authorList>
    </citation>
    <scope>NUCLEOTIDE SEQUENCE [MRNA]</scope>
    <source>
        <strain>cv. Columbia</strain>
    </source>
</reference>
<reference key="2">
    <citation type="journal article" date="1999" name="Plant Cell Rep.">
        <title>Characterization of a glutathione S-transferase gene ATGST1 in Arabidopsis thaliana.</title>
        <authorList>
            <person name="Yang K.Y."/>
            <person name="Kim E.Y."/>
            <person name="Kim K.S."/>
            <person name="Choi S.N."/>
            <person name="Guh J.O."/>
            <person name="Kim K.C."/>
            <person name="Cho B.-H."/>
        </authorList>
    </citation>
    <scope>NUCLEOTIDE SEQUENCE [GENOMIC DNA]</scope>
    <source>
        <strain>cv. Landsberg erecta</strain>
    </source>
</reference>
<reference key="3">
    <citation type="submission" date="1993-03" db="EMBL/GenBank/DDBJ databases">
        <authorList>
            <person name="Yu G.-L."/>
            <person name="Ausubel F.M."/>
        </authorList>
    </citation>
    <scope>NUCLEOTIDE SEQUENCE [GENOMIC DNA]</scope>
    <source>
        <strain>cv. Columbia</strain>
    </source>
</reference>
<reference key="4">
    <citation type="journal article" date="2000" name="Nature">
        <title>Sequence and analysis of chromosome 1 of the plant Arabidopsis thaliana.</title>
        <authorList>
            <person name="Theologis A."/>
            <person name="Ecker J.R."/>
            <person name="Palm C.J."/>
            <person name="Federspiel N.A."/>
            <person name="Kaul S."/>
            <person name="White O."/>
            <person name="Alonso J."/>
            <person name="Altafi H."/>
            <person name="Araujo R."/>
            <person name="Bowman C.L."/>
            <person name="Brooks S.Y."/>
            <person name="Buehler E."/>
            <person name="Chan A."/>
            <person name="Chao Q."/>
            <person name="Chen H."/>
            <person name="Cheuk R.F."/>
            <person name="Chin C.W."/>
            <person name="Chung M.K."/>
            <person name="Conn L."/>
            <person name="Conway A.B."/>
            <person name="Conway A.R."/>
            <person name="Creasy T.H."/>
            <person name="Dewar K."/>
            <person name="Dunn P."/>
            <person name="Etgu P."/>
            <person name="Feldblyum T.V."/>
            <person name="Feng J.-D."/>
            <person name="Fong B."/>
            <person name="Fujii C.Y."/>
            <person name="Gill J.E."/>
            <person name="Goldsmith A.D."/>
            <person name="Haas B."/>
            <person name="Hansen N.F."/>
            <person name="Hughes B."/>
            <person name="Huizar L."/>
            <person name="Hunter J.L."/>
            <person name="Jenkins J."/>
            <person name="Johnson-Hopson C."/>
            <person name="Khan S."/>
            <person name="Khaykin E."/>
            <person name="Kim C.J."/>
            <person name="Koo H.L."/>
            <person name="Kremenetskaia I."/>
            <person name="Kurtz D.B."/>
            <person name="Kwan A."/>
            <person name="Lam B."/>
            <person name="Langin-Hooper S."/>
            <person name="Lee A."/>
            <person name="Lee J.M."/>
            <person name="Lenz C.A."/>
            <person name="Li J.H."/>
            <person name="Li Y.-P."/>
            <person name="Lin X."/>
            <person name="Liu S.X."/>
            <person name="Liu Z.A."/>
            <person name="Luros J.S."/>
            <person name="Maiti R."/>
            <person name="Marziali A."/>
            <person name="Militscher J."/>
            <person name="Miranda M."/>
            <person name="Nguyen M."/>
            <person name="Nierman W.C."/>
            <person name="Osborne B.I."/>
            <person name="Pai G."/>
            <person name="Peterson J."/>
            <person name="Pham P.K."/>
            <person name="Rizzo M."/>
            <person name="Rooney T."/>
            <person name="Rowley D."/>
            <person name="Sakano H."/>
            <person name="Salzberg S.L."/>
            <person name="Schwartz J.R."/>
            <person name="Shinn P."/>
            <person name="Southwick A.M."/>
            <person name="Sun H."/>
            <person name="Tallon L.J."/>
            <person name="Tambunga G."/>
            <person name="Toriumi M.J."/>
            <person name="Town C.D."/>
            <person name="Utterback T."/>
            <person name="Van Aken S."/>
            <person name="Vaysberg M."/>
            <person name="Vysotskaia V.S."/>
            <person name="Walker M."/>
            <person name="Wu D."/>
            <person name="Yu G."/>
            <person name="Fraser C.M."/>
            <person name="Venter J.C."/>
            <person name="Davis R.W."/>
        </authorList>
    </citation>
    <scope>NUCLEOTIDE SEQUENCE [LARGE SCALE GENOMIC DNA]</scope>
    <source>
        <strain>cv. Columbia</strain>
    </source>
</reference>
<reference key="5">
    <citation type="journal article" date="2017" name="Plant J.">
        <title>Araport11: a complete reannotation of the Arabidopsis thaliana reference genome.</title>
        <authorList>
            <person name="Cheng C.Y."/>
            <person name="Krishnakumar V."/>
            <person name="Chan A.P."/>
            <person name="Thibaud-Nissen F."/>
            <person name="Schobel S."/>
            <person name="Town C.D."/>
        </authorList>
    </citation>
    <scope>GENOME REANNOTATION</scope>
    <source>
        <strain>cv. Columbia</strain>
    </source>
</reference>
<reference key="6">
    <citation type="journal article" date="2003" name="Science">
        <title>Empirical analysis of transcriptional activity in the Arabidopsis genome.</title>
        <authorList>
            <person name="Yamada K."/>
            <person name="Lim J."/>
            <person name="Dale J.M."/>
            <person name="Chen H."/>
            <person name="Shinn P."/>
            <person name="Palm C.J."/>
            <person name="Southwick A.M."/>
            <person name="Wu H.C."/>
            <person name="Kim C.J."/>
            <person name="Nguyen M."/>
            <person name="Pham P.K."/>
            <person name="Cheuk R.F."/>
            <person name="Karlin-Newmann G."/>
            <person name="Liu S.X."/>
            <person name="Lam B."/>
            <person name="Sakano H."/>
            <person name="Wu T."/>
            <person name="Yu G."/>
            <person name="Miranda M."/>
            <person name="Quach H.L."/>
            <person name="Tripp M."/>
            <person name="Chang C.H."/>
            <person name="Lee J.M."/>
            <person name="Toriumi M.J."/>
            <person name="Chan M.M."/>
            <person name="Tang C.C."/>
            <person name="Onodera C.S."/>
            <person name="Deng J.M."/>
            <person name="Akiyama K."/>
            <person name="Ansari Y."/>
            <person name="Arakawa T."/>
            <person name="Banh J."/>
            <person name="Banno F."/>
            <person name="Bowser L."/>
            <person name="Brooks S.Y."/>
            <person name="Carninci P."/>
            <person name="Chao Q."/>
            <person name="Choy N."/>
            <person name="Enju A."/>
            <person name="Goldsmith A.D."/>
            <person name="Gurjal M."/>
            <person name="Hansen N.F."/>
            <person name="Hayashizaki Y."/>
            <person name="Johnson-Hopson C."/>
            <person name="Hsuan V.W."/>
            <person name="Iida K."/>
            <person name="Karnes M."/>
            <person name="Khan S."/>
            <person name="Koesema E."/>
            <person name="Ishida J."/>
            <person name="Jiang P.X."/>
            <person name="Jones T."/>
            <person name="Kawai J."/>
            <person name="Kamiya A."/>
            <person name="Meyers C."/>
            <person name="Nakajima M."/>
            <person name="Narusaka M."/>
            <person name="Seki M."/>
            <person name="Sakurai T."/>
            <person name="Satou M."/>
            <person name="Tamse R."/>
            <person name="Vaysberg M."/>
            <person name="Wallender E.K."/>
            <person name="Wong C."/>
            <person name="Yamamura Y."/>
            <person name="Yuan S."/>
            <person name="Shinozaki K."/>
            <person name="Davis R.W."/>
            <person name="Theologis A."/>
            <person name="Ecker J.R."/>
        </authorList>
    </citation>
    <scope>NUCLEOTIDE SEQUENCE [LARGE SCALE MRNA]</scope>
    <source>
        <strain>cv. Columbia</strain>
    </source>
</reference>
<reference key="7">
    <citation type="journal article" date="2002" name="Plant Mol. Biol.">
        <title>Probing the diversity of the Arabidopsis glutathione S-transferase gene family.</title>
        <authorList>
            <person name="Wagner U."/>
            <person name="Edwards R."/>
            <person name="Dixon D.P."/>
            <person name="Mauch F."/>
        </authorList>
    </citation>
    <scope>INDUCTION</scope>
    <scope>GENE FAMILY</scope>
    <scope>NOMENCLATURE</scope>
</reference>
<reference key="8">
    <citation type="journal article" date="2003" name="Plant Cell Physiol.">
        <title>The rapid induction of glutathione S-transferases AtGSTF2 and AtGSTF6 by avirulent Pseudomonas syringae is the result of combined salicylic acid and ethylene signaling.</title>
        <authorList>
            <person name="Lieberherr D."/>
            <person name="Wagner U."/>
            <person name="Dubuis P.H."/>
            <person name="Metraux J.P."/>
            <person name="Mauch F."/>
        </authorList>
    </citation>
    <scope>INDUCTION</scope>
</reference>
<reference key="9">
    <citation type="journal article" date="2004" name="J. Biol. Chem.">
        <title>Proteomic analysis of Arabidopsis glutathione S-transferases from benoxacor- and copper-treated seedlings.</title>
        <authorList>
            <person name="Smith A.P."/>
            <person name="DeRidder B.P."/>
            <person name="Guo W.J."/>
            <person name="Seeley E.H."/>
            <person name="Regnier F.E."/>
            <person name="Goldsbrough P.B."/>
        </authorList>
    </citation>
    <scope>INDUCTION BY COPPER</scope>
</reference>
<reference key="10">
    <citation type="journal article" date="2006" name="Proteomics">
        <title>The early responses of Arabidopsis thaliana cells to cadmium exposure explored by protein and metabolite profiling analyses.</title>
        <authorList>
            <person name="Sarry J.-E."/>
            <person name="Kuhn L."/>
            <person name="Ducruix C."/>
            <person name="Lafaye A."/>
            <person name="Junot C."/>
            <person name="Hugouvieux V."/>
            <person name="Jourdain A."/>
            <person name="Bastien O."/>
            <person name="Fievet J.B."/>
            <person name="Vailhen D."/>
            <person name="Amekraz B."/>
            <person name="Moulin C."/>
            <person name="Ezan E."/>
            <person name="Garin J."/>
            <person name="Bourguignon J."/>
        </authorList>
    </citation>
    <scope>INDUCTION BY CADMIUM</scope>
    <source>
        <strain>cv. Columbia</strain>
    </source>
</reference>
<reference key="11">
    <citation type="journal article" date="2011" name="Plant Cell">
        <title>Glutathione-indole-3-acetonitrile is required for camalexin biosynthesis in Arabidopsis thaliana.</title>
        <authorList>
            <person name="Su T."/>
            <person name="Xu J."/>
            <person name="Li Y."/>
            <person name="Lei L."/>
            <person name="Zhao L."/>
            <person name="Yang H."/>
            <person name="Feng J."/>
            <person name="Liu G."/>
            <person name="Ren D."/>
        </authorList>
    </citation>
    <scope>FUNCTION</scope>
    <scope>DISRUPTION PHENOTYPE</scope>
</reference>
<accession>P42760</accession>
<organism>
    <name type="scientific">Arabidopsis thaliana</name>
    <name type="common">Mouse-ear cress</name>
    <dbReference type="NCBI Taxonomy" id="3702"/>
    <lineage>
        <taxon>Eukaryota</taxon>
        <taxon>Viridiplantae</taxon>
        <taxon>Streptophyta</taxon>
        <taxon>Embryophyta</taxon>
        <taxon>Tracheophyta</taxon>
        <taxon>Spermatophyta</taxon>
        <taxon>Magnoliopsida</taxon>
        <taxon>eudicotyledons</taxon>
        <taxon>Gunneridae</taxon>
        <taxon>Pentapetalae</taxon>
        <taxon>rosids</taxon>
        <taxon>malvids</taxon>
        <taxon>Brassicales</taxon>
        <taxon>Brassicaceae</taxon>
        <taxon>Camelineae</taxon>
        <taxon>Arabidopsis</taxon>
    </lineage>
</organism>
<name>GSTF6_ARATH</name>
<feature type="chain" id="PRO_0000185846" description="Glutathione S-transferase F6">
    <location>
        <begin position="1"/>
        <end position="208"/>
    </location>
</feature>
<feature type="domain" description="GST N-terminal">
    <location>
        <begin position="2"/>
        <end position="83"/>
    </location>
</feature>
<feature type="domain" description="GST C-terminal">
    <location>
        <begin position="89"/>
        <end position="208"/>
    </location>
</feature>
<feature type="binding site" evidence="1">
    <location>
        <begin position="12"/>
        <end position="13"/>
    </location>
    <ligand>
        <name>glutathione</name>
        <dbReference type="ChEBI" id="CHEBI:57925"/>
    </ligand>
</feature>
<feature type="binding site" evidence="1">
    <location>
        <begin position="41"/>
        <end position="42"/>
    </location>
    <ligand>
        <name>glutathione</name>
        <dbReference type="ChEBI" id="CHEBI:57925"/>
    </ligand>
</feature>
<feature type="binding site" evidence="1">
    <location>
        <begin position="54"/>
        <end position="55"/>
    </location>
    <ligand>
        <name>glutathione</name>
        <dbReference type="ChEBI" id="CHEBI:57925"/>
    </ligand>
</feature>
<feature type="binding site" evidence="1">
    <location>
        <begin position="67"/>
        <end position="68"/>
    </location>
    <ligand>
        <name>glutathione</name>
        <dbReference type="ChEBI" id="CHEBI:57925"/>
    </ligand>
</feature>
<feature type="sequence conflict" description="In Ref. 1; BAA04553." evidence="7" ref="1">
    <original>S</original>
    <variation>F</variation>
    <location>
        <position position="12"/>
    </location>
</feature>
<proteinExistence type="evidence at transcript level"/>
<gene>
    <name type="primary">GSTF6</name>
    <name type="synonym">ERD11</name>
    <name type="synonym">GST1</name>
    <name type="synonym">GSTF3</name>
    <name type="ordered locus">At1g02930</name>
    <name type="ORF">F22D16.7</name>
</gene>
<comment type="function">
    <text evidence="6">Involved in camalexin biosynthesis by probably catalyzing the conjugation of GSH with indole-3-acetonitrile (IAN). May be involved in the conjugation of reduced glutathione to a wide number of exogenous and endogenous hydrophobic electrophiles and have a detoxification role against certain herbicides.</text>
</comment>
<comment type="catalytic activity">
    <reaction>
        <text>RX + glutathione = an S-substituted glutathione + a halide anion + H(+)</text>
        <dbReference type="Rhea" id="RHEA:16437"/>
        <dbReference type="ChEBI" id="CHEBI:15378"/>
        <dbReference type="ChEBI" id="CHEBI:16042"/>
        <dbReference type="ChEBI" id="CHEBI:17792"/>
        <dbReference type="ChEBI" id="CHEBI:57925"/>
        <dbReference type="ChEBI" id="CHEBI:90779"/>
        <dbReference type="EC" id="2.5.1.18"/>
    </reaction>
</comment>
<comment type="subcellular location">
    <subcellularLocation>
        <location evidence="7">Cytoplasm</location>
        <location evidence="7">Cytosol</location>
    </subcellularLocation>
</comment>
<comment type="induction">
    <text evidence="2 3 4 5">By dehydration stress, salicylic acid, ethylene, methyl jasmonate, auxin, H(2)O(2), copper, metolachlor, and the pathogens P.syringae and Hyaloperonospora parasitica. Induced by cadmium (PubMed:16502469).</text>
</comment>
<comment type="disruption phenotype">
    <text evidence="6">No visible phenotype under normal growth conditions, but reduced levels of camalexin production during infection by B.cinerea.</text>
</comment>
<comment type="similarity">
    <text evidence="7">Belongs to the GST superfamily. Phi family.</text>
</comment>
<protein>
    <recommendedName>
        <fullName>Glutathione S-transferase F6</fullName>
        <shortName>AtGSTF6</shortName>
        <ecNumber>2.5.1.18</ecNumber>
    </recommendedName>
    <alternativeName>
        <fullName>AtGSTF3</fullName>
    </alternativeName>
    <alternativeName>
        <fullName>GST class-phi member 6</fullName>
    </alternativeName>
    <alternativeName>
        <fullName>Glutathione S-transferase 1</fullName>
        <shortName>AtGST1</shortName>
    </alternativeName>
    <alternativeName>
        <fullName>Protein EARLY RESPONSE TO DEHYDRATION 11</fullName>
    </alternativeName>
</protein>
<sequence>MAGIKVFGHPASTATRRVLIALHEKNVDFEFVHVELKDGEHKKEPFILRNPFGKVPAFEDGDFKIFESRAITQYIAHEFSDKGNNLLSTGKDMAIIAMGIEIESHEFDPVGSKLVWEQVLKPLYGMTTDKTVVEEEEAKLAKVLDVYEHRLGESKYLASDHFTLVDLHTIPVIQYLLGTPTKKLFDERPHVSAWVADITSRPSAQKVL</sequence>
<dbReference type="EC" id="2.5.1.18"/>
<dbReference type="EMBL" id="D17672">
    <property type="protein sequence ID" value="BAA04553.1"/>
    <property type="molecule type" value="mRNA"/>
</dbReference>
<dbReference type="EMBL" id="Y11727">
    <property type="protein sequence ID" value="CAA72413.1"/>
    <property type="molecule type" value="Genomic_DNA"/>
</dbReference>
<dbReference type="EMBL" id="L12057">
    <property type="status" value="NOT_ANNOTATED_CDS"/>
    <property type="molecule type" value="Genomic_RNA"/>
</dbReference>
<dbReference type="EMBL" id="AC009525">
    <property type="protein sequence ID" value="AAF02873.1"/>
    <property type="molecule type" value="Genomic_DNA"/>
</dbReference>
<dbReference type="EMBL" id="CP002684">
    <property type="protein sequence ID" value="AEE27497.1"/>
    <property type="molecule type" value="Genomic_DNA"/>
</dbReference>
<dbReference type="EMBL" id="CP002684">
    <property type="protein sequence ID" value="AEE27498.1"/>
    <property type="molecule type" value="Genomic_DNA"/>
</dbReference>
<dbReference type="EMBL" id="AY050332">
    <property type="protein sequence ID" value="AAK91349.1"/>
    <property type="molecule type" value="mRNA"/>
</dbReference>
<dbReference type="EMBL" id="AY097392">
    <property type="protein sequence ID" value="AAM19908.1"/>
    <property type="molecule type" value="mRNA"/>
</dbReference>
<dbReference type="PIR" id="G86159">
    <property type="entry name" value="G86159"/>
</dbReference>
<dbReference type="PIR" id="S39541">
    <property type="entry name" value="S39541"/>
</dbReference>
<dbReference type="RefSeq" id="NP_001184893.1">
    <property type="nucleotide sequence ID" value="NM_001197964.1"/>
</dbReference>
<dbReference type="RefSeq" id="NP_171792.1">
    <property type="nucleotide sequence ID" value="NM_100174.3"/>
</dbReference>
<dbReference type="SMR" id="P42760"/>
<dbReference type="BioGRID" id="24750">
    <property type="interactions" value="2"/>
</dbReference>
<dbReference type="FunCoup" id="P42760">
    <property type="interactions" value="1039"/>
</dbReference>
<dbReference type="IntAct" id="P42760">
    <property type="interactions" value="3"/>
</dbReference>
<dbReference type="STRING" id="3702.P42760"/>
<dbReference type="PaxDb" id="3702-AT1G02930.1"/>
<dbReference type="ProteomicsDB" id="247299"/>
<dbReference type="EnsemblPlants" id="AT1G02930.1">
    <property type="protein sequence ID" value="AT1G02930.1"/>
    <property type="gene ID" value="AT1G02930"/>
</dbReference>
<dbReference type="EnsemblPlants" id="AT1G02930.2">
    <property type="protein sequence ID" value="AT1G02930.2"/>
    <property type="gene ID" value="AT1G02930"/>
</dbReference>
<dbReference type="GeneID" id="839515"/>
<dbReference type="Gramene" id="AT1G02930.1">
    <property type="protein sequence ID" value="AT1G02930.1"/>
    <property type="gene ID" value="AT1G02930"/>
</dbReference>
<dbReference type="Gramene" id="AT1G02930.2">
    <property type="protein sequence ID" value="AT1G02930.2"/>
    <property type="gene ID" value="AT1G02930"/>
</dbReference>
<dbReference type="KEGG" id="ath:AT1G02930"/>
<dbReference type="Araport" id="AT1G02930"/>
<dbReference type="TAIR" id="AT1G02930">
    <property type="gene designation" value="GSTF6"/>
</dbReference>
<dbReference type="eggNOG" id="KOG0867">
    <property type="taxonomic scope" value="Eukaryota"/>
</dbReference>
<dbReference type="HOGENOM" id="CLU_011226_5_1_1"/>
<dbReference type="InParanoid" id="P42760"/>
<dbReference type="OMA" id="KNVDFEF"/>
<dbReference type="OrthoDB" id="422574at2759"/>
<dbReference type="PhylomeDB" id="P42760"/>
<dbReference type="BioCyc" id="ARA:AT1G02930-MONOMER"/>
<dbReference type="BioCyc" id="MetaCyc:AT1G02930-MONOMER"/>
<dbReference type="CD-CODE" id="4299E36E">
    <property type="entry name" value="Nucleolus"/>
</dbReference>
<dbReference type="PRO" id="PR:P42760"/>
<dbReference type="Proteomes" id="UP000006548">
    <property type="component" value="Chromosome 1"/>
</dbReference>
<dbReference type="ExpressionAtlas" id="P42760">
    <property type="expression patterns" value="baseline and differential"/>
</dbReference>
<dbReference type="GO" id="GO:0005737">
    <property type="term" value="C:cytoplasm"/>
    <property type="evidence" value="ECO:0000303"/>
    <property type="project" value="TAIR"/>
</dbReference>
<dbReference type="GO" id="GO:0005829">
    <property type="term" value="C:cytosol"/>
    <property type="evidence" value="ECO:0007005"/>
    <property type="project" value="TAIR"/>
</dbReference>
<dbReference type="GO" id="GO:0005576">
    <property type="term" value="C:extracellular region"/>
    <property type="evidence" value="ECO:0007005"/>
    <property type="project" value="TAIR"/>
</dbReference>
<dbReference type="GO" id="GO:0005739">
    <property type="term" value="C:mitochondrion"/>
    <property type="evidence" value="ECO:0007005"/>
    <property type="project" value="TAIR"/>
</dbReference>
<dbReference type="GO" id="GO:0009505">
    <property type="term" value="C:plant-type cell wall"/>
    <property type="evidence" value="ECO:0007005"/>
    <property type="project" value="TAIR"/>
</dbReference>
<dbReference type="GO" id="GO:0000325">
    <property type="term" value="C:plant-type vacuole"/>
    <property type="evidence" value="ECO:0007005"/>
    <property type="project" value="TAIR"/>
</dbReference>
<dbReference type="GO" id="GO:0009506">
    <property type="term" value="C:plasmodesma"/>
    <property type="evidence" value="ECO:0007005"/>
    <property type="project" value="TAIR"/>
</dbReference>
<dbReference type="GO" id="GO:2001147">
    <property type="term" value="F:camalexin binding"/>
    <property type="evidence" value="ECO:0000314"/>
    <property type="project" value="TAIR"/>
</dbReference>
<dbReference type="GO" id="GO:0050897">
    <property type="term" value="F:cobalt ion binding"/>
    <property type="evidence" value="ECO:0007005"/>
    <property type="project" value="TAIR"/>
</dbReference>
<dbReference type="GO" id="GO:0005507">
    <property type="term" value="F:copper ion binding"/>
    <property type="evidence" value="ECO:0007005"/>
    <property type="project" value="TAIR"/>
</dbReference>
<dbReference type="GO" id="GO:0043295">
    <property type="term" value="F:glutathione binding"/>
    <property type="evidence" value="ECO:0000314"/>
    <property type="project" value="TAIR"/>
</dbReference>
<dbReference type="GO" id="GO:0004364">
    <property type="term" value="F:glutathione transferase activity"/>
    <property type="evidence" value="ECO:0007669"/>
    <property type="project" value="UniProtKB-EC"/>
</dbReference>
<dbReference type="GO" id="GO:2001227">
    <property type="term" value="F:quercitrin binding"/>
    <property type="evidence" value="ECO:0000314"/>
    <property type="project" value="TAIR"/>
</dbReference>
<dbReference type="GO" id="GO:0006952">
    <property type="term" value="P:defense response"/>
    <property type="evidence" value="ECO:0007669"/>
    <property type="project" value="UniProtKB-KW"/>
</dbReference>
<dbReference type="GO" id="GO:0046686">
    <property type="term" value="P:response to cadmium ion"/>
    <property type="evidence" value="ECO:0000270"/>
    <property type="project" value="TAIR"/>
</dbReference>
<dbReference type="GO" id="GO:0006979">
    <property type="term" value="P:response to oxidative stress"/>
    <property type="evidence" value="ECO:0000270"/>
    <property type="project" value="TAIR"/>
</dbReference>
<dbReference type="GO" id="GO:0009414">
    <property type="term" value="P:response to water deprivation"/>
    <property type="evidence" value="ECO:0000270"/>
    <property type="project" value="TAIR"/>
</dbReference>
<dbReference type="GO" id="GO:0009407">
    <property type="term" value="P:toxin catabolic process"/>
    <property type="evidence" value="ECO:0000304"/>
    <property type="project" value="TAIR"/>
</dbReference>
<dbReference type="CDD" id="cd03187">
    <property type="entry name" value="GST_C_Phi"/>
    <property type="match status" value="1"/>
</dbReference>
<dbReference type="CDD" id="cd03053">
    <property type="entry name" value="GST_N_Phi"/>
    <property type="match status" value="1"/>
</dbReference>
<dbReference type="FunFam" id="1.20.1050.10:FF:000004">
    <property type="entry name" value="Glutathione S-transferase F2"/>
    <property type="match status" value="1"/>
</dbReference>
<dbReference type="FunFam" id="3.40.30.10:FF:000016">
    <property type="entry name" value="Glutathione S-transferase F2"/>
    <property type="match status" value="1"/>
</dbReference>
<dbReference type="Gene3D" id="1.20.1050.10">
    <property type="match status" value="1"/>
</dbReference>
<dbReference type="Gene3D" id="3.40.30.10">
    <property type="entry name" value="Glutaredoxin"/>
    <property type="match status" value="1"/>
</dbReference>
<dbReference type="InterPro" id="IPR010987">
    <property type="entry name" value="Glutathione-S-Trfase_C-like"/>
</dbReference>
<dbReference type="InterPro" id="IPR036282">
    <property type="entry name" value="Glutathione-S-Trfase_C_sf"/>
</dbReference>
<dbReference type="InterPro" id="IPR004045">
    <property type="entry name" value="Glutathione_S-Trfase_N"/>
</dbReference>
<dbReference type="InterPro" id="IPR004046">
    <property type="entry name" value="GST_C"/>
</dbReference>
<dbReference type="InterPro" id="IPR034347">
    <property type="entry name" value="GST_Phi_C"/>
</dbReference>
<dbReference type="InterPro" id="IPR036249">
    <property type="entry name" value="Thioredoxin-like_sf"/>
</dbReference>
<dbReference type="PANTHER" id="PTHR43900:SF47">
    <property type="entry name" value="GLUTATHIONE S-TRANSFERASE F6-RELATED"/>
    <property type="match status" value="1"/>
</dbReference>
<dbReference type="PANTHER" id="PTHR43900">
    <property type="entry name" value="GLUTATHIONE S-TRANSFERASE RHO"/>
    <property type="match status" value="1"/>
</dbReference>
<dbReference type="Pfam" id="PF00043">
    <property type="entry name" value="GST_C"/>
    <property type="match status" value="1"/>
</dbReference>
<dbReference type="Pfam" id="PF02798">
    <property type="entry name" value="GST_N"/>
    <property type="match status" value="1"/>
</dbReference>
<dbReference type="SFLD" id="SFLDG01154">
    <property type="entry name" value="Main.5:_Phi-like"/>
    <property type="match status" value="1"/>
</dbReference>
<dbReference type="SFLD" id="SFLDG00358">
    <property type="entry name" value="Main_(cytGST)"/>
    <property type="match status" value="1"/>
</dbReference>
<dbReference type="SUPFAM" id="SSF47616">
    <property type="entry name" value="GST C-terminal domain-like"/>
    <property type="match status" value="1"/>
</dbReference>
<dbReference type="SUPFAM" id="SSF52833">
    <property type="entry name" value="Thioredoxin-like"/>
    <property type="match status" value="1"/>
</dbReference>
<dbReference type="PROSITE" id="PS50405">
    <property type="entry name" value="GST_CTER"/>
    <property type="match status" value="1"/>
</dbReference>
<dbReference type="PROSITE" id="PS50404">
    <property type="entry name" value="GST_NTER"/>
    <property type="match status" value="1"/>
</dbReference>
<keyword id="KW-0963">Cytoplasm</keyword>
<keyword id="KW-0216">Detoxification</keyword>
<keyword id="KW-0611">Plant defense</keyword>
<keyword id="KW-1185">Reference proteome</keyword>
<keyword id="KW-0346">Stress response</keyword>
<keyword id="KW-0808">Transferase</keyword>